<organism>
    <name type="scientific">Methanococcus maripaludis (strain C7 / ATCC BAA-1331)</name>
    <dbReference type="NCBI Taxonomy" id="426368"/>
    <lineage>
        <taxon>Archaea</taxon>
        <taxon>Methanobacteriati</taxon>
        <taxon>Methanobacteriota</taxon>
        <taxon>Methanomada group</taxon>
        <taxon>Methanococci</taxon>
        <taxon>Methanococcales</taxon>
        <taxon>Methanococcaceae</taxon>
        <taxon>Methanococcus</taxon>
    </lineage>
</organism>
<evidence type="ECO:0000255" key="1">
    <source>
        <dbReference type="HAMAP-Rule" id="MF_01093"/>
    </source>
</evidence>
<keyword id="KW-1003">Cell membrane</keyword>
<keyword id="KW-0170">Cobalt</keyword>
<keyword id="KW-0472">Membrane</keyword>
<keyword id="KW-0484">Methanogenesis</keyword>
<keyword id="KW-0489">Methyltransferase</keyword>
<keyword id="KW-0554">One-carbon metabolism</keyword>
<keyword id="KW-0808">Transferase</keyword>
<keyword id="KW-1278">Translocase</keyword>
<keyword id="KW-0812">Transmembrane</keyword>
<keyword id="KW-1133">Transmembrane helix</keyword>
<protein>
    <recommendedName>
        <fullName evidence="1">Tetrahydromethanopterin S-methyltransferase subunit A</fullName>
        <ecNumber evidence="1">7.2.1.4</ecNumber>
    </recommendedName>
    <alternativeName>
        <fullName evidence="1">N5-methyltetrahydromethanopterin--coenzyme M methyltransferase subunit A</fullName>
    </alternativeName>
</protein>
<reference key="1">
    <citation type="submission" date="2007-06" db="EMBL/GenBank/DDBJ databases">
        <title>Complete sequence of Methanococcus maripaludis C7.</title>
        <authorList>
            <consortium name="US DOE Joint Genome Institute"/>
            <person name="Copeland A."/>
            <person name="Lucas S."/>
            <person name="Lapidus A."/>
            <person name="Barry K."/>
            <person name="Glavina del Rio T."/>
            <person name="Dalin E."/>
            <person name="Tice H."/>
            <person name="Pitluck S."/>
            <person name="Clum A."/>
            <person name="Schmutz J."/>
            <person name="Larimer F."/>
            <person name="Land M."/>
            <person name="Hauser L."/>
            <person name="Kyrpides N."/>
            <person name="Anderson I."/>
            <person name="Sieprawska-Lupa M."/>
            <person name="Whitman W.B."/>
            <person name="Richardson P."/>
        </authorList>
    </citation>
    <scope>NUCLEOTIDE SEQUENCE [LARGE SCALE GENOMIC DNA]</scope>
    <source>
        <strain>C7 / ATCC BAA-1331</strain>
    </source>
</reference>
<accession>A6VHF2</accession>
<sequence length="239" mass="25209">MANKKSPAATWPVANGEYVLGNPESCVGVITLGSHGLDQAAVDAGAALSGPCHTENLGIEKVVANYISNPNIRFMIIAGSEVQGHITGQCIKALYENGIGDDGGIIGAKGAIPFMENIGKEPVERLQRQIIDCIDLIDVEDTAKIAAAIKNCTSQDPDAIDEEPMVVDLEGGEAVANTESTSMKPTSPEMALLEARMKIVSEKMNEAAMIAKFNSGYYNGKIQGIAIGLFLSILVFSLL</sequence>
<feature type="chain" id="PRO_0000403063" description="Tetrahydromethanopterin S-methyltransferase subunit A">
    <location>
        <begin position="1"/>
        <end position="239"/>
    </location>
</feature>
<feature type="topological domain" description="Cytoplasmic" evidence="1">
    <location>
        <begin position="1"/>
        <end position="215"/>
    </location>
</feature>
<feature type="transmembrane region" description="Helical" evidence="1">
    <location>
        <begin position="216"/>
        <end position="238"/>
    </location>
</feature>
<feature type="topological domain" description="Extracellular" evidence="1">
    <location>
        <position position="239"/>
    </location>
</feature>
<feature type="binding site" evidence="1">
    <location>
        <position position="85"/>
    </location>
    <ligand>
        <name>5-hydroxybenzimidazolylcob(I)amide</name>
        <dbReference type="ChEBI" id="CHEBI:60494"/>
        <note>cofactor</note>
    </ligand>
</feature>
<dbReference type="EC" id="7.2.1.4" evidence="1"/>
<dbReference type="EMBL" id="CP000745">
    <property type="protein sequence ID" value="ABR65878.1"/>
    <property type="molecule type" value="Genomic_DNA"/>
</dbReference>
<dbReference type="SMR" id="A6VHF2"/>
<dbReference type="STRING" id="426368.MmarC7_0811"/>
<dbReference type="KEGG" id="mmz:MmarC7_0811"/>
<dbReference type="eggNOG" id="arCOG03221">
    <property type="taxonomic scope" value="Archaea"/>
</dbReference>
<dbReference type="HOGENOM" id="CLU_100863_0_0_2"/>
<dbReference type="OrthoDB" id="130682at2157"/>
<dbReference type="UniPathway" id="UPA00640">
    <property type="reaction ID" value="UER00698"/>
</dbReference>
<dbReference type="GO" id="GO:0005886">
    <property type="term" value="C:plasma membrane"/>
    <property type="evidence" value="ECO:0007669"/>
    <property type="project" value="UniProtKB-SubCell"/>
</dbReference>
<dbReference type="GO" id="GO:0050897">
    <property type="term" value="F:cobalt ion binding"/>
    <property type="evidence" value="ECO:0007669"/>
    <property type="project" value="InterPro"/>
</dbReference>
<dbReference type="GO" id="GO:0030269">
    <property type="term" value="F:tetrahydromethanopterin S-methyltransferase activity"/>
    <property type="evidence" value="ECO:0007669"/>
    <property type="project" value="UniProtKB-UniRule"/>
</dbReference>
<dbReference type="GO" id="GO:0019386">
    <property type="term" value="P:methanogenesis, from carbon dioxide"/>
    <property type="evidence" value="ECO:0007669"/>
    <property type="project" value="UniProtKB-UniRule"/>
</dbReference>
<dbReference type="GO" id="GO:0032259">
    <property type="term" value="P:methylation"/>
    <property type="evidence" value="ECO:0007669"/>
    <property type="project" value="UniProtKB-KW"/>
</dbReference>
<dbReference type="GO" id="GO:0006730">
    <property type="term" value="P:one-carbon metabolic process"/>
    <property type="evidence" value="ECO:0007669"/>
    <property type="project" value="UniProtKB-UniRule"/>
</dbReference>
<dbReference type="HAMAP" id="MF_01093">
    <property type="entry name" value="MtrA"/>
    <property type="match status" value="1"/>
</dbReference>
<dbReference type="InterPro" id="IPR030688">
    <property type="entry name" value="MeTrfase_MtrA/MtxA"/>
</dbReference>
<dbReference type="InterPro" id="IPR005778">
    <property type="entry name" value="MtrA"/>
</dbReference>
<dbReference type="NCBIfam" id="TIGR01111">
    <property type="entry name" value="mtrA"/>
    <property type="match status" value="1"/>
</dbReference>
<dbReference type="NCBIfam" id="NF002126">
    <property type="entry name" value="PRK00964.1-4"/>
    <property type="match status" value="1"/>
</dbReference>
<dbReference type="Pfam" id="PF04208">
    <property type="entry name" value="MtrA"/>
    <property type="match status" value="1"/>
</dbReference>
<dbReference type="PIRSF" id="PIRSF500207">
    <property type="entry name" value="MtrA"/>
    <property type="match status" value="1"/>
</dbReference>
<dbReference type="PIRSF" id="PIRSF009452">
    <property type="entry name" value="MtrA_MtxA"/>
    <property type="match status" value="1"/>
</dbReference>
<comment type="function">
    <text evidence="1">Part of a complex that catalyzes the formation of methyl-coenzyme M and tetrahydromethanopterin from coenzyme M and methyl-tetrahydromethanopterin. This is an energy-conserving, sodium-ion translocating step.</text>
</comment>
<comment type="catalytic activity">
    <reaction evidence="1">
        <text>5-methyl-5,6,7,8-tetrahydromethanopterin + coenzyme M + 2 Na(+)(in) = 5,6,7,8-tetrahydromethanopterin + methyl-coenzyme M + 2 Na(+)(out)</text>
        <dbReference type="Rhea" id="RHEA:53492"/>
        <dbReference type="ChEBI" id="CHEBI:29101"/>
        <dbReference type="ChEBI" id="CHEBI:58103"/>
        <dbReference type="ChEBI" id="CHEBI:58116"/>
        <dbReference type="ChEBI" id="CHEBI:58286"/>
        <dbReference type="ChEBI" id="CHEBI:58319"/>
        <dbReference type="EC" id="7.2.1.4"/>
    </reaction>
</comment>
<comment type="cofactor">
    <cofactor evidence="1">
        <name>5-hydroxybenzimidazolylcob(I)amide</name>
        <dbReference type="ChEBI" id="CHEBI:60494"/>
    </cofactor>
    <text evidence="1">Binds 1 5-hydroxybenzimidazolylcobamide group.</text>
</comment>
<comment type="pathway">
    <text evidence="1">One-carbon metabolism; methanogenesis from CO(2); methyl-coenzyme M from 5,10-methylene-5,6,7,8-tetrahydromethanopterin: step 2/2.</text>
</comment>
<comment type="subunit">
    <text evidence="1">The complex is composed of 8 subunits; MtrA, MtrB, MtrC, MtrD, MtrE, MtrF, MtrG and MtrH.</text>
</comment>
<comment type="subcellular location">
    <subcellularLocation>
        <location evidence="1">Cell membrane</location>
        <topology evidence="1">Single-pass membrane protein</topology>
    </subcellularLocation>
</comment>
<comment type="similarity">
    <text evidence="1">Belongs to the MtrA family.</text>
</comment>
<gene>
    <name evidence="1" type="primary">mtrA</name>
    <name type="ordered locus">MmarC7_0811</name>
</gene>
<name>MTRA_METM7</name>
<proteinExistence type="inferred from homology"/>